<feature type="chain" id="PRO_1000016311" description="Histidine--tRNA ligase">
    <location>
        <begin position="1"/>
        <end position="427"/>
    </location>
</feature>
<accession>Q2NIN2</accession>
<keyword id="KW-0030">Aminoacyl-tRNA synthetase</keyword>
<keyword id="KW-0067">ATP-binding</keyword>
<keyword id="KW-0963">Cytoplasm</keyword>
<keyword id="KW-0436">Ligase</keyword>
<keyword id="KW-0547">Nucleotide-binding</keyword>
<keyword id="KW-0648">Protein biosynthesis</keyword>
<organism>
    <name type="scientific">Aster yellows witches'-broom phytoplasma (strain AYWB)</name>
    <dbReference type="NCBI Taxonomy" id="322098"/>
    <lineage>
        <taxon>Bacteria</taxon>
        <taxon>Bacillati</taxon>
        <taxon>Mycoplasmatota</taxon>
        <taxon>Mollicutes</taxon>
        <taxon>Acholeplasmatales</taxon>
        <taxon>Acholeplasmataceae</taxon>
        <taxon>Candidatus Phytoplasma</taxon>
        <taxon>16SrI (Aster yellows group)</taxon>
    </lineage>
</organism>
<evidence type="ECO:0000255" key="1">
    <source>
        <dbReference type="HAMAP-Rule" id="MF_00127"/>
    </source>
</evidence>
<proteinExistence type="inferred from homology"/>
<gene>
    <name evidence="1" type="primary">hisS</name>
    <name type="ordered locus">AYWB_594</name>
</gene>
<reference key="1">
    <citation type="journal article" date="2006" name="J. Bacteriol.">
        <title>Living with genome instability: the adaptation of phytoplasmas to diverse environments of their insect and plant hosts.</title>
        <authorList>
            <person name="Bai X."/>
            <person name="Zhang J."/>
            <person name="Ewing A."/>
            <person name="Miller S.A."/>
            <person name="Jancso Radek A."/>
            <person name="Shevchenko D.V."/>
            <person name="Tsukerman K."/>
            <person name="Walunas T."/>
            <person name="Lapidus A."/>
            <person name="Campbell J.W."/>
            <person name="Hogenhout S.A."/>
        </authorList>
    </citation>
    <scope>NUCLEOTIDE SEQUENCE [LARGE SCALE GENOMIC DNA]</scope>
    <source>
        <strain>AYWB</strain>
    </source>
</reference>
<comment type="catalytic activity">
    <reaction evidence="1">
        <text>tRNA(His) + L-histidine + ATP = L-histidyl-tRNA(His) + AMP + diphosphate + H(+)</text>
        <dbReference type="Rhea" id="RHEA:17313"/>
        <dbReference type="Rhea" id="RHEA-COMP:9665"/>
        <dbReference type="Rhea" id="RHEA-COMP:9689"/>
        <dbReference type="ChEBI" id="CHEBI:15378"/>
        <dbReference type="ChEBI" id="CHEBI:30616"/>
        <dbReference type="ChEBI" id="CHEBI:33019"/>
        <dbReference type="ChEBI" id="CHEBI:57595"/>
        <dbReference type="ChEBI" id="CHEBI:78442"/>
        <dbReference type="ChEBI" id="CHEBI:78527"/>
        <dbReference type="ChEBI" id="CHEBI:456215"/>
        <dbReference type="EC" id="6.1.1.21"/>
    </reaction>
</comment>
<comment type="subunit">
    <text evidence="1">Homodimer.</text>
</comment>
<comment type="subcellular location">
    <subcellularLocation>
        <location evidence="1">Cytoplasm</location>
    </subcellularLocation>
</comment>
<comment type="similarity">
    <text evidence="1">Belongs to the class-II aminoacyl-tRNA synthetase family.</text>
</comment>
<dbReference type="EC" id="6.1.1.21" evidence="1"/>
<dbReference type="EMBL" id="CP000061">
    <property type="protein sequence ID" value="ABC65711.1"/>
    <property type="molecule type" value="Genomic_DNA"/>
</dbReference>
<dbReference type="RefSeq" id="WP_011412873.1">
    <property type="nucleotide sequence ID" value="NC_007716.1"/>
</dbReference>
<dbReference type="SMR" id="Q2NIN2"/>
<dbReference type="STRING" id="322098.AYWB_594"/>
<dbReference type="KEGG" id="ayw:AYWB_594"/>
<dbReference type="eggNOG" id="COG0124">
    <property type="taxonomic scope" value="Bacteria"/>
</dbReference>
<dbReference type="HOGENOM" id="CLU_025113_1_1_14"/>
<dbReference type="OrthoDB" id="9800814at2"/>
<dbReference type="PhylomeDB" id="Q2NIN2"/>
<dbReference type="Proteomes" id="UP000001934">
    <property type="component" value="Chromosome"/>
</dbReference>
<dbReference type="GO" id="GO:0005737">
    <property type="term" value="C:cytoplasm"/>
    <property type="evidence" value="ECO:0007669"/>
    <property type="project" value="UniProtKB-SubCell"/>
</dbReference>
<dbReference type="GO" id="GO:0005524">
    <property type="term" value="F:ATP binding"/>
    <property type="evidence" value="ECO:0007669"/>
    <property type="project" value="UniProtKB-UniRule"/>
</dbReference>
<dbReference type="GO" id="GO:0004821">
    <property type="term" value="F:histidine-tRNA ligase activity"/>
    <property type="evidence" value="ECO:0007669"/>
    <property type="project" value="UniProtKB-UniRule"/>
</dbReference>
<dbReference type="GO" id="GO:0006427">
    <property type="term" value="P:histidyl-tRNA aminoacylation"/>
    <property type="evidence" value="ECO:0007669"/>
    <property type="project" value="UniProtKB-UniRule"/>
</dbReference>
<dbReference type="CDD" id="cd00773">
    <property type="entry name" value="HisRS-like_core"/>
    <property type="match status" value="1"/>
</dbReference>
<dbReference type="Gene3D" id="3.40.50.800">
    <property type="entry name" value="Anticodon-binding domain"/>
    <property type="match status" value="1"/>
</dbReference>
<dbReference type="Gene3D" id="3.30.930.10">
    <property type="entry name" value="Bira Bifunctional Protein, Domain 2"/>
    <property type="match status" value="1"/>
</dbReference>
<dbReference type="HAMAP" id="MF_00127">
    <property type="entry name" value="His_tRNA_synth"/>
    <property type="match status" value="1"/>
</dbReference>
<dbReference type="InterPro" id="IPR006195">
    <property type="entry name" value="aa-tRNA-synth_II"/>
</dbReference>
<dbReference type="InterPro" id="IPR045864">
    <property type="entry name" value="aa-tRNA-synth_II/BPL/LPL"/>
</dbReference>
<dbReference type="InterPro" id="IPR004154">
    <property type="entry name" value="Anticodon-bd"/>
</dbReference>
<dbReference type="InterPro" id="IPR036621">
    <property type="entry name" value="Anticodon-bd_dom_sf"/>
</dbReference>
<dbReference type="InterPro" id="IPR015807">
    <property type="entry name" value="His-tRNA-ligase"/>
</dbReference>
<dbReference type="InterPro" id="IPR041715">
    <property type="entry name" value="HisRS-like_core"/>
</dbReference>
<dbReference type="InterPro" id="IPR004516">
    <property type="entry name" value="HisRS/HisZ"/>
</dbReference>
<dbReference type="NCBIfam" id="TIGR00442">
    <property type="entry name" value="hisS"/>
    <property type="match status" value="1"/>
</dbReference>
<dbReference type="PANTHER" id="PTHR43707:SF1">
    <property type="entry name" value="HISTIDINE--TRNA LIGASE, MITOCHONDRIAL-RELATED"/>
    <property type="match status" value="1"/>
</dbReference>
<dbReference type="PANTHER" id="PTHR43707">
    <property type="entry name" value="HISTIDYL-TRNA SYNTHETASE"/>
    <property type="match status" value="1"/>
</dbReference>
<dbReference type="Pfam" id="PF03129">
    <property type="entry name" value="HGTP_anticodon"/>
    <property type="match status" value="1"/>
</dbReference>
<dbReference type="Pfam" id="PF13393">
    <property type="entry name" value="tRNA-synt_His"/>
    <property type="match status" value="1"/>
</dbReference>
<dbReference type="PIRSF" id="PIRSF001549">
    <property type="entry name" value="His-tRNA_synth"/>
    <property type="match status" value="1"/>
</dbReference>
<dbReference type="SUPFAM" id="SSF52954">
    <property type="entry name" value="Class II aaRS ABD-related"/>
    <property type="match status" value="1"/>
</dbReference>
<dbReference type="SUPFAM" id="SSF55681">
    <property type="entry name" value="Class II aaRS and biotin synthetases"/>
    <property type="match status" value="1"/>
</dbReference>
<dbReference type="PROSITE" id="PS50862">
    <property type="entry name" value="AA_TRNA_LIGASE_II"/>
    <property type="match status" value="1"/>
</dbReference>
<name>SYH_AYWBP</name>
<protein>
    <recommendedName>
        <fullName evidence="1">Histidine--tRNA ligase</fullName>
        <ecNumber evidence="1">6.1.1.21</ecNumber>
    </recommendedName>
    <alternativeName>
        <fullName evidence="1">Histidyl-tRNA synthetase</fullName>
        <shortName evidence="1">HisRS</shortName>
    </alternativeName>
</protein>
<sequence length="427" mass="49715">MFSKIKGTHDLMLDKMVCWQKVENHIRTLFAKYHLQEIRTPIIEYRGVFDRAAQHSEMVSKETYTFTDKKGRFITLRPEGTAGVIRSYVENKLDKTSQLHKFFYYGPFFRYERPQKGRYRQFHQVGVEILGQSSPFLDVEVIFLAYKTLKSLGICDITVKINSLGCKTTYNNYLQVFKNYLQTHYQQLCPLCQERFEKNILRIWDCKNCNNEPFLKQAPRIFDHLVEDAKVRFLQVLEGLKQMNVNFELCHDLVRGLDYYTNSVFEIVYNNEQGHQAVLGGGGCYDNLVTLFRGSPSPGIGFALGMERLMSILATRSFCNKNILPSLDAFILVSEPQFFYQGLELATTLRHQGFSADLNYKFLSFSKSLKQALKKQPLYLLILGPKEFANNQITIKNTYTQQQTTILQKDVVSYLQNNKELNYIHEN</sequence>